<evidence type="ECO:0000255" key="1">
    <source>
        <dbReference type="HAMAP-Rule" id="MF_00542"/>
    </source>
</evidence>
<sequence length="367" mass="39774">MSERILTINPGSTSTKIGIFDGTEQVFTKTLRHSAEAVGGPLSDQLNIRRQVVLDVLAQEQIDLKALTAIVGRGGLLRPLVSGTYRVNQEMREDLLNGTFGIHASNLGGLLADEIGQTLSIPAFIVDPVVVDELEPIARLTGLPELERKSIFHALNQKAVAKRYAKENGIPYEQLRLIVAHMGGGITVGAHLNGRVIDVNNGLDGEGAFSPERSGSLPVGQLVELCYSTKYKLEEMKRLVVGSGGLVAHLGTYDAVEIERRIDDGDEKAALLYEAMAYRVAKEIAAQSAVLYGQVDAVILTGGLAYSDRLTKAIEERIAHIGSIIRIPGEDELRALAEGVIRVLRQEEQVKEYGGELTWLENSTSLS</sequence>
<reference key="1">
    <citation type="submission" date="2008-04" db="EMBL/GenBank/DDBJ databases">
        <title>Complete sequence of chromosome of Exiguobacterium sibiricum 255-15.</title>
        <authorList>
            <consortium name="US DOE Joint Genome Institute"/>
            <person name="Copeland A."/>
            <person name="Lucas S."/>
            <person name="Lapidus A."/>
            <person name="Glavina del Rio T."/>
            <person name="Dalin E."/>
            <person name="Tice H."/>
            <person name="Bruce D."/>
            <person name="Goodwin L."/>
            <person name="Pitluck S."/>
            <person name="Kiss H."/>
            <person name="Chertkov O."/>
            <person name="Monk C."/>
            <person name="Brettin T."/>
            <person name="Detter J.C."/>
            <person name="Han C."/>
            <person name="Kuske C.R."/>
            <person name="Schmutz J."/>
            <person name="Larimer F."/>
            <person name="Land M."/>
            <person name="Hauser L."/>
            <person name="Kyrpides N."/>
            <person name="Mikhailova N."/>
            <person name="Vishnivetskaya T."/>
            <person name="Rodrigues D.F."/>
            <person name="Gilichinsky D."/>
            <person name="Tiedje J."/>
            <person name="Richardson P."/>
        </authorList>
    </citation>
    <scope>NUCLEOTIDE SEQUENCE [LARGE SCALE GENOMIC DNA]</scope>
    <source>
        <strain>DSM 17290 / CCUG 55495 / CIP 109462 / JCM 13490 / 255-15</strain>
    </source>
</reference>
<accession>B1YLR4</accession>
<gene>
    <name evidence="1" type="primary">buk</name>
    <name type="ordered locus">Exig_0917</name>
</gene>
<keyword id="KW-0067">ATP-binding</keyword>
<keyword id="KW-0963">Cytoplasm</keyword>
<keyword id="KW-0418">Kinase</keyword>
<keyword id="KW-0547">Nucleotide-binding</keyword>
<keyword id="KW-1185">Reference proteome</keyword>
<keyword id="KW-0808">Transferase</keyword>
<dbReference type="EC" id="2.7.2.7" evidence="1"/>
<dbReference type="EMBL" id="CP001022">
    <property type="protein sequence ID" value="ACB60397.1"/>
    <property type="molecule type" value="Genomic_DNA"/>
</dbReference>
<dbReference type="RefSeq" id="WP_012369821.1">
    <property type="nucleotide sequence ID" value="NC_010556.1"/>
</dbReference>
<dbReference type="SMR" id="B1YLR4"/>
<dbReference type="STRING" id="262543.Exig_0917"/>
<dbReference type="KEGG" id="esi:Exig_0917"/>
<dbReference type="eggNOG" id="COG3426">
    <property type="taxonomic scope" value="Bacteria"/>
</dbReference>
<dbReference type="HOGENOM" id="CLU_048716_0_0_9"/>
<dbReference type="OrthoDB" id="9771859at2"/>
<dbReference type="Proteomes" id="UP000001681">
    <property type="component" value="Chromosome"/>
</dbReference>
<dbReference type="GO" id="GO:0005737">
    <property type="term" value="C:cytoplasm"/>
    <property type="evidence" value="ECO:0007669"/>
    <property type="project" value="UniProtKB-SubCell"/>
</dbReference>
<dbReference type="GO" id="GO:0008776">
    <property type="term" value="F:acetate kinase activity"/>
    <property type="evidence" value="ECO:0007669"/>
    <property type="project" value="TreeGrafter"/>
</dbReference>
<dbReference type="GO" id="GO:0005524">
    <property type="term" value="F:ATP binding"/>
    <property type="evidence" value="ECO:0007669"/>
    <property type="project" value="UniProtKB-KW"/>
</dbReference>
<dbReference type="GO" id="GO:0047761">
    <property type="term" value="F:butyrate kinase activity"/>
    <property type="evidence" value="ECO:0007669"/>
    <property type="project" value="UniProtKB-UniRule"/>
</dbReference>
<dbReference type="GO" id="GO:0006083">
    <property type="term" value="P:acetate metabolic process"/>
    <property type="evidence" value="ECO:0007669"/>
    <property type="project" value="TreeGrafter"/>
</dbReference>
<dbReference type="CDD" id="cd24011">
    <property type="entry name" value="ASKHA_NBD_BK"/>
    <property type="match status" value="1"/>
</dbReference>
<dbReference type="Gene3D" id="3.30.420.40">
    <property type="match status" value="2"/>
</dbReference>
<dbReference type="HAMAP" id="MF_00542">
    <property type="entry name" value="Butyrate_kinase"/>
    <property type="match status" value="1"/>
</dbReference>
<dbReference type="InterPro" id="IPR000890">
    <property type="entry name" value="Aliphatic_acid_kin_short-chain"/>
</dbReference>
<dbReference type="InterPro" id="IPR023865">
    <property type="entry name" value="Aliphatic_acid_kinase_CS"/>
</dbReference>
<dbReference type="InterPro" id="IPR043129">
    <property type="entry name" value="ATPase_NBD"/>
</dbReference>
<dbReference type="InterPro" id="IPR011245">
    <property type="entry name" value="Butyrate_kin"/>
</dbReference>
<dbReference type="NCBIfam" id="TIGR02707">
    <property type="entry name" value="butyr_kinase"/>
    <property type="match status" value="1"/>
</dbReference>
<dbReference type="NCBIfam" id="NF002834">
    <property type="entry name" value="PRK03011.1-5"/>
    <property type="match status" value="1"/>
</dbReference>
<dbReference type="PANTHER" id="PTHR21060">
    <property type="entry name" value="ACETATE KINASE"/>
    <property type="match status" value="1"/>
</dbReference>
<dbReference type="PANTHER" id="PTHR21060:SF3">
    <property type="entry name" value="BUTYRATE KINASE 2-RELATED"/>
    <property type="match status" value="1"/>
</dbReference>
<dbReference type="Pfam" id="PF00871">
    <property type="entry name" value="Acetate_kinase"/>
    <property type="match status" value="1"/>
</dbReference>
<dbReference type="PIRSF" id="PIRSF036458">
    <property type="entry name" value="Butyrate_kin"/>
    <property type="match status" value="1"/>
</dbReference>
<dbReference type="PRINTS" id="PR00471">
    <property type="entry name" value="ACETATEKNASE"/>
</dbReference>
<dbReference type="SUPFAM" id="SSF53067">
    <property type="entry name" value="Actin-like ATPase domain"/>
    <property type="match status" value="2"/>
</dbReference>
<dbReference type="PROSITE" id="PS01075">
    <property type="entry name" value="ACETATE_KINASE_1"/>
    <property type="match status" value="1"/>
</dbReference>
<dbReference type="PROSITE" id="PS01076">
    <property type="entry name" value="ACETATE_KINASE_2"/>
    <property type="match status" value="1"/>
</dbReference>
<protein>
    <recommendedName>
        <fullName evidence="1">Probable butyrate kinase</fullName>
        <shortName evidence="1">BK</shortName>
        <ecNumber evidence="1">2.7.2.7</ecNumber>
    </recommendedName>
    <alternativeName>
        <fullName evidence="1">Branched-chain carboxylic acid kinase</fullName>
    </alternativeName>
</protein>
<feature type="chain" id="PRO_1000146589" description="Probable butyrate kinase">
    <location>
        <begin position="1"/>
        <end position="367"/>
    </location>
</feature>
<name>BUK_EXIS2</name>
<proteinExistence type="inferred from homology"/>
<organism>
    <name type="scientific">Exiguobacterium sibiricum (strain DSM 17290 / CCUG 55495 / CIP 109462 / JCM 13490 / 255-15)</name>
    <dbReference type="NCBI Taxonomy" id="262543"/>
    <lineage>
        <taxon>Bacteria</taxon>
        <taxon>Bacillati</taxon>
        <taxon>Bacillota</taxon>
        <taxon>Bacilli</taxon>
        <taxon>Bacillales</taxon>
        <taxon>Bacillales Family XII. Incertae Sedis</taxon>
        <taxon>Exiguobacterium</taxon>
    </lineage>
</organism>
<comment type="catalytic activity">
    <reaction evidence="1">
        <text>butanoate + ATP = butanoyl phosphate + ADP</text>
        <dbReference type="Rhea" id="RHEA:13585"/>
        <dbReference type="ChEBI" id="CHEBI:17968"/>
        <dbReference type="ChEBI" id="CHEBI:30616"/>
        <dbReference type="ChEBI" id="CHEBI:58079"/>
        <dbReference type="ChEBI" id="CHEBI:456216"/>
        <dbReference type="EC" id="2.7.2.7"/>
    </reaction>
</comment>
<comment type="subcellular location">
    <subcellularLocation>
        <location evidence="1">Cytoplasm</location>
    </subcellularLocation>
</comment>
<comment type="similarity">
    <text evidence="1">Belongs to the acetokinase family.</text>
</comment>